<organism>
    <name type="scientific">Listeria monocytogenes serotype 4b (strain CLIP80459)</name>
    <dbReference type="NCBI Taxonomy" id="568819"/>
    <lineage>
        <taxon>Bacteria</taxon>
        <taxon>Bacillati</taxon>
        <taxon>Bacillota</taxon>
        <taxon>Bacilli</taxon>
        <taxon>Bacillales</taxon>
        <taxon>Listeriaceae</taxon>
        <taxon>Listeria</taxon>
    </lineage>
</organism>
<proteinExistence type="inferred from homology"/>
<keyword id="KW-0028">Amino-acid biosynthesis</keyword>
<keyword id="KW-0057">Aromatic amino acid biosynthesis</keyword>
<keyword id="KW-0963">Cytoplasm</keyword>
<keyword id="KW-0808">Transferase</keyword>
<gene>
    <name evidence="1" type="primary">aroA</name>
    <name type="ordered locus">Lm4b_01940</name>
</gene>
<protein>
    <recommendedName>
        <fullName evidence="1">3-phosphoshikimate 1-carboxyvinyltransferase</fullName>
        <ecNumber evidence="1">2.5.1.19</ecNumber>
    </recommendedName>
    <alternativeName>
        <fullName evidence="1">5-enolpyruvylshikimate-3-phosphate synthase</fullName>
        <shortName evidence="1">EPSP synthase</shortName>
        <shortName evidence="1">EPSPS</shortName>
    </alternativeName>
</protein>
<reference key="1">
    <citation type="journal article" date="2012" name="BMC Genomics">
        <title>Comparative genomics and transcriptomics of lineages I, II, and III strains of Listeria monocytogenes.</title>
        <authorList>
            <person name="Hain T."/>
            <person name="Ghai R."/>
            <person name="Billion A."/>
            <person name="Kuenne C.T."/>
            <person name="Steinweg C."/>
            <person name="Izar B."/>
            <person name="Mohamed W."/>
            <person name="Mraheil M."/>
            <person name="Domann E."/>
            <person name="Schaffrath S."/>
            <person name="Karst U."/>
            <person name="Goesmann A."/>
            <person name="Oehm S."/>
            <person name="Puhler A."/>
            <person name="Merkl R."/>
            <person name="Vorwerk S."/>
            <person name="Glaser P."/>
            <person name="Garrido P."/>
            <person name="Rusniok C."/>
            <person name="Buchrieser C."/>
            <person name="Goebel W."/>
            <person name="Chakraborty T."/>
        </authorList>
    </citation>
    <scope>NUCLEOTIDE SEQUENCE [LARGE SCALE GENOMIC DNA]</scope>
    <source>
        <strain>CLIP80459</strain>
    </source>
</reference>
<evidence type="ECO:0000255" key="1">
    <source>
        <dbReference type="HAMAP-Rule" id="MF_00210"/>
    </source>
</evidence>
<sequence>MKLITNKQGLVGAITVPGDKSMSHRSIMFGAIAEGKTVIRHFLRADDCLGTIKAFKALGVKIEETEEEIIVHGTGFDGLKQADGPLDIGNSGTTIRLMMGILAGRDFDTVILGDESIAKRPMNRVMLPLQQMGAKMHGKDGSEFAPITINGKQSLKRMEYHMPVASAQVKSAIIFAALQAEGETIIHEKEKTRDHTEHMIRQFGGEIEMDGLTIRVKGGQTFTGQEMTVPGDVSSAAFFIVAGLITPGSEIELTHVGLNPTRTGIFDVVEQMGGSLVVKDSSRSTGKLAGTVVVKTSDLKGTEIGGDIIPRLIDEIPVIALLATQAEGTTIIKDAAELKVKETNRIDAVATELNKMGADITPTEDGLIIRGKTPLHAANVTSYGDHRIGMMLQIAALLVEEGDVELERPEAVSVSYPTFFEDIRSLLK</sequence>
<accession>C1KWM3</accession>
<dbReference type="EC" id="2.5.1.19" evidence="1"/>
<dbReference type="EMBL" id="FM242711">
    <property type="protein sequence ID" value="CAS05698.1"/>
    <property type="molecule type" value="Genomic_DNA"/>
</dbReference>
<dbReference type="RefSeq" id="WP_003726519.1">
    <property type="nucleotide sequence ID" value="NC_012488.1"/>
</dbReference>
<dbReference type="SMR" id="C1KWM3"/>
<dbReference type="KEGG" id="lmc:Lm4b_01940"/>
<dbReference type="HOGENOM" id="CLU_024321_0_1_9"/>
<dbReference type="UniPathway" id="UPA00053">
    <property type="reaction ID" value="UER00089"/>
</dbReference>
<dbReference type="GO" id="GO:0005737">
    <property type="term" value="C:cytoplasm"/>
    <property type="evidence" value="ECO:0007669"/>
    <property type="project" value="UniProtKB-SubCell"/>
</dbReference>
<dbReference type="GO" id="GO:0003866">
    <property type="term" value="F:3-phosphoshikimate 1-carboxyvinyltransferase activity"/>
    <property type="evidence" value="ECO:0007669"/>
    <property type="project" value="UniProtKB-UniRule"/>
</dbReference>
<dbReference type="GO" id="GO:0008652">
    <property type="term" value="P:amino acid biosynthetic process"/>
    <property type="evidence" value="ECO:0007669"/>
    <property type="project" value="UniProtKB-KW"/>
</dbReference>
<dbReference type="GO" id="GO:0009073">
    <property type="term" value="P:aromatic amino acid family biosynthetic process"/>
    <property type="evidence" value="ECO:0007669"/>
    <property type="project" value="UniProtKB-KW"/>
</dbReference>
<dbReference type="GO" id="GO:0009423">
    <property type="term" value="P:chorismate biosynthetic process"/>
    <property type="evidence" value="ECO:0007669"/>
    <property type="project" value="UniProtKB-UniRule"/>
</dbReference>
<dbReference type="CDD" id="cd01556">
    <property type="entry name" value="EPSP_synthase"/>
    <property type="match status" value="1"/>
</dbReference>
<dbReference type="FunFam" id="3.65.10.10:FF:000005">
    <property type="entry name" value="3-phosphoshikimate 1-carboxyvinyltransferase"/>
    <property type="match status" value="1"/>
</dbReference>
<dbReference type="FunFam" id="3.65.10.10:FF:000006">
    <property type="entry name" value="3-phosphoshikimate 1-carboxyvinyltransferase"/>
    <property type="match status" value="1"/>
</dbReference>
<dbReference type="Gene3D" id="3.65.10.10">
    <property type="entry name" value="Enolpyruvate transferase domain"/>
    <property type="match status" value="2"/>
</dbReference>
<dbReference type="HAMAP" id="MF_00210">
    <property type="entry name" value="EPSP_synth"/>
    <property type="match status" value="1"/>
</dbReference>
<dbReference type="InterPro" id="IPR001986">
    <property type="entry name" value="Enolpyruvate_Tfrase_dom"/>
</dbReference>
<dbReference type="InterPro" id="IPR036968">
    <property type="entry name" value="Enolpyruvate_Tfrase_sf"/>
</dbReference>
<dbReference type="InterPro" id="IPR006264">
    <property type="entry name" value="EPSP_synthase"/>
</dbReference>
<dbReference type="InterPro" id="IPR023193">
    <property type="entry name" value="EPSP_synthase_CS"/>
</dbReference>
<dbReference type="InterPro" id="IPR013792">
    <property type="entry name" value="RNA3'P_cycl/enolpyr_Trfase_a/b"/>
</dbReference>
<dbReference type="NCBIfam" id="TIGR01356">
    <property type="entry name" value="aroA"/>
    <property type="match status" value="1"/>
</dbReference>
<dbReference type="PANTHER" id="PTHR21090">
    <property type="entry name" value="AROM/DEHYDROQUINATE SYNTHASE"/>
    <property type="match status" value="1"/>
</dbReference>
<dbReference type="PANTHER" id="PTHR21090:SF5">
    <property type="entry name" value="PENTAFUNCTIONAL AROM POLYPEPTIDE"/>
    <property type="match status" value="1"/>
</dbReference>
<dbReference type="Pfam" id="PF00275">
    <property type="entry name" value="EPSP_synthase"/>
    <property type="match status" value="1"/>
</dbReference>
<dbReference type="PIRSF" id="PIRSF000505">
    <property type="entry name" value="EPSPS"/>
    <property type="match status" value="1"/>
</dbReference>
<dbReference type="SUPFAM" id="SSF55205">
    <property type="entry name" value="EPT/RTPC-like"/>
    <property type="match status" value="1"/>
</dbReference>
<dbReference type="PROSITE" id="PS00104">
    <property type="entry name" value="EPSP_SYNTHASE_1"/>
    <property type="match status" value="1"/>
</dbReference>
<dbReference type="PROSITE" id="PS00885">
    <property type="entry name" value="EPSP_SYNTHASE_2"/>
    <property type="match status" value="1"/>
</dbReference>
<name>AROA_LISMC</name>
<feature type="chain" id="PRO_1000204167" description="3-phosphoshikimate 1-carboxyvinyltransferase">
    <location>
        <begin position="1"/>
        <end position="428"/>
    </location>
</feature>
<feature type="active site" description="Proton acceptor" evidence="1">
    <location>
        <position position="314"/>
    </location>
</feature>
<feature type="binding site" evidence="1">
    <location>
        <position position="20"/>
    </location>
    <ligand>
        <name>3-phosphoshikimate</name>
        <dbReference type="ChEBI" id="CHEBI:145989"/>
    </ligand>
</feature>
<feature type="binding site" evidence="1">
    <location>
        <position position="20"/>
    </location>
    <ligand>
        <name>phosphoenolpyruvate</name>
        <dbReference type="ChEBI" id="CHEBI:58702"/>
    </ligand>
</feature>
<feature type="binding site" evidence="1">
    <location>
        <position position="21"/>
    </location>
    <ligand>
        <name>3-phosphoshikimate</name>
        <dbReference type="ChEBI" id="CHEBI:145989"/>
    </ligand>
</feature>
<feature type="binding site" evidence="1">
    <location>
        <position position="25"/>
    </location>
    <ligand>
        <name>3-phosphoshikimate</name>
        <dbReference type="ChEBI" id="CHEBI:145989"/>
    </ligand>
</feature>
<feature type="binding site" evidence="1">
    <location>
        <position position="92"/>
    </location>
    <ligand>
        <name>phosphoenolpyruvate</name>
        <dbReference type="ChEBI" id="CHEBI:58702"/>
    </ligand>
</feature>
<feature type="binding site" evidence="1">
    <location>
        <position position="120"/>
    </location>
    <ligand>
        <name>phosphoenolpyruvate</name>
        <dbReference type="ChEBI" id="CHEBI:58702"/>
    </ligand>
</feature>
<feature type="binding site" evidence="1">
    <location>
        <position position="166"/>
    </location>
    <ligand>
        <name>3-phosphoshikimate</name>
        <dbReference type="ChEBI" id="CHEBI:145989"/>
    </ligand>
</feature>
<feature type="binding site" evidence="1">
    <location>
        <position position="168"/>
    </location>
    <ligand>
        <name>3-phosphoshikimate</name>
        <dbReference type="ChEBI" id="CHEBI:145989"/>
    </ligand>
</feature>
<feature type="binding site" evidence="1">
    <location>
        <position position="168"/>
    </location>
    <ligand>
        <name>phosphoenolpyruvate</name>
        <dbReference type="ChEBI" id="CHEBI:58702"/>
    </ligand>
</feature>
<feature type="binding site" evidence="1">
    <location>
        <position position="314"/>
    </location>
    <ligand>
        <name>3-phosphoshikimate</name>
        <dbReference type="ChEBI" id="CHEBI:145989"/>
    </ligand>
</feature>
<feature type="binding site" evidence="1">
    <location>
        <position position="341"/>
    </location>
    <ligand>
        <name>3-phosphoshikimate</name>
        <dbReference type="ChEBI" id="CHEBI:145989"/>
    </ligand>
</feature>
<feature type="binding site" evidence="1">
    <location>
        <position position="345"/>
    </location>
    <ligand>
        <name>phosphoenolpyruvate</name>
        <dbReference type="ChEBI" id="CHEBI:58702"/>
    </ligand>
</feature>
<feature type="binding site" evidence="1">
    <location>
        <position position="387"/>
    </location>
    <ligand>
        <name>phosphoenolpyruvate</name>
        <dbReference type="ChEBI" id="CHEBI:58702"/>
    </ligand>
</feature>
<comment type="function">
    <text evidence="1">Catalyzes the transfer of the enolpyruvyl moiety of phosphoenolpyruvate (PEP) to the 5-hydroxyl of shikimate-3-phosphate (S3P) to produce enolpyruvyl shikimate-3-phosphate and inorganic phosphate.</text>
</comment>
<comment type="catalytic activity">
    <reaction evidence="1">
        <text>3-phosphoshikimate + phosphoenolpyruvate = 5-O-(1-carboxyvinyl)-3-phosphoshikimate + phosphate</text>
        <dbReference type="Rhea" id="RHEA:21256"/>
        <dbReference type="ChEBI" id="CHEBI:43474"/>
        <dbReference type="ChEBI" id="CHEBI:57701"/>
        <dbReference type="ChEBI" id="CHEBI:58702"/>
        <dbReference type="ChEBI" id="CHEBI:145989"/>
        <dbReference type="EC" id="2.5.1.19"/>
    </reaction>
    <physiologicalReaction direction="left-to-right" evidence="1">
        <dbReference type="Rhea" id="RHEA:21257"/>
    </physiologicalReaction>
</comment>
<comment type="pathway">
    <text evidence="1">Metabolic intermediate biosynthesis; chorismate biosynthesis; chorismate from D-erythrose 4-phosphate and phosphoenolpyruvate: step 6/7.</text>
</comment>
<comment type="subunit">
    <text evidence="1">Monomer.</text>
</comment>
<comment type="subcellular location">
    <subcellularLocation>
        <location evidence="1">Cytoplasm</location>
    </subcellularLocation>
</comment>
<comment type="similarity">
    <text evidence="1">Belongs to the EPSP synthase family.</text>
</comment>